<reference key="1">
    <citation type="journal article" date="2005" name="Nature">
        <title>The genome of the social amoeba Dictyostelium discoideum.</title>
        <authorList>
            <person name="Eichinger L."/>
            <person name="Pachebat J.A."/>
            <person name="Gloeckner G."/>
            <person name="Rajandream M.A."/>
            <person name="Sucgang R."/>
            <person name="Berriman M."/>
            <person name="Song J."/>
            <person name="Olsen R."/>
            <person name="Szafranski K."/>
            <person name="Xu Q."/>
            <person name="Tunggal B."/>
            <person name="Kummerfeld S."/>
            <person name="Madera M."/>
            <person name="Konfortov B.A."/>
            <person name="Rivero F."/>
            <person name="Bankier A.T."/>
            <person name="Lehmann R."/>
            <person name="Hamlin N."/>
            <person name="Davies R."/>
            <person name="Gaudet P."/>
            <person name="Fey P."/>
            <person name="Pilcher K."/>
            <person name="Chen G."/>
            <person name="Saunders D."/>
            <person name="Sodergren E.J."/>
            <person name="Davis P."/>
            <person name="Kerhornou A."/>
            <person name="Nie X."/>
            <person name="Hall N."/>
            <person name="Anjard C."/>
            <person name="Hemphill L."/>
            <person name="Bason N."/>
            <person name="Farbrother P."/>
            <person name="Desany B."/>
            <person name="Just E."/>
            <person name="Morio T."/>
            <person name="Rost R."/>
            <person name="Churcher C.M."/>
            <person name="Cooper J."/>
            <person name="Haydock S."/>
            <person name="van Driessche N."/>
            <person name="Cronin A."/>
            <person name="Goodhead I."/>
            <person name="Muzny D.M."/>
            <person name="Mourier T."/>
            <person name="Pain A."/>
            <person name="Lu M."/>
            <person name="Harper D."/>
            <person name="Lindsay R."/>
            <person name="Hauser H."/>
            <person name="James K.D."/>
            <person name="Quiles M."/>
            <person name="Madan Babu M."/>
            <person name="Saito T."/>
            <person name="Buchrieser C."/>
            <person name="Wardroper A."/>
            <person name="Felder M."/>
            <person name="Thangavelu M."/>
            <person name="Johnson D."/>
            <person name="Knights A."/>
            <person name="Loulseged H."/>
            <person name="Mungall K.L."/>
            <person name="Oliver K."/>
            <person name="Price C."/>
            <person name="Quail M.A."/>
            <person name="Urushihara H."/>
            <person name="Hernandez J."/>
            <person name="Rabbinowitsch E."/>
            <person name="Steffen D."/>
            <person name="Sanders M."/>
            <person name="Ma J."/>
            <person name="Kohara Y."/>
            <person name="Sharp S."/>
            <person name="Simmonds M.N."/>
            <person name="Spiegler S."/>
            <person name="Tivey A."/>
            <person name="Sugano S."/>
            <person name="White B."/>
            <person name="Walker D."/>
            <person name="Woodward J.R."/>
            <person name="Winckler T."/>
            <person name="Tanaka Y."/>
            <person name="Shaulsky G."/>
            <person name="Schleicher M."/>
            <person name="Weinstock G.M."/>
            <person name="Rosenthal A."/>
            <person name="Cox E.C."/>
            <person name="Chisholm R.L."/>
            <person name="Gibbs R.A."/>
            <person name="Loomis W.F."/>
            <person name="Platzer M."/>
            <person name="Kay R.R."/>
            <person name="Williams J.G."/>
            <person name="Dear P.H."/>
            <person name="Noegel A.A."/>
            <person name="Barrell B.G."/>
            <person name="Kuspa A."/>
        </authorList>
    </citation>
    <scope>NUCLEOTIDE SEQUENCE [LARGE SCALE GENOMIC DNA]</scope>
    <source>
        <strain>AX4</strain>
    </source>
</reference>
<dbReference type="EMBL" id="AAFI02000064">
    <property type="protein sequence ID" value="EAL65248.1"/>
    <property type="molecule type" value="Genomic_DNA"/>
</dbReference>
<dbReference type="RefSeq" id="XP_638608.1">
    <property type="nucleotide sequence ID" value="XM_633516.1"/>
</dbReference>
<dbReference type="SMR" id="Q54PP6"/>
<dbReference type="FunCoup" id="Q54PP6">
    <property type="interactions" value="744"/>
</dbReference>
<dbReference type="PaxDb" id="44689-DDB0220510"/>
<dbReference type="EnsemblProtists" id="EAL65248">
    <property type="protein sequence ID" value="EAL65248"/>
    <property type="gene ID" value="DDB_G0284399"/>
</dbReference>
<dbReference type="GeneID" id="8624579"/>
<dbReference type="KEGG" id="ddi:DDB_G0284399"/>
<dbReference type="dictyBase" id="DDB_G0284399">
    <property type="gene designation" value="mybY"/>
</dbReference>
<dbReference type="VEuPathDB" id="AmoebaDB:DDB_G0284399"/>
<dbReference type="eggNOG" id="ENOG502RDT5">
    <property type="taxonomic scope" value="Eukaryota"/>
</dbReference>
<dbReference type="HOGENOM" id="CLU_476877_0_0_1"/>
<dbReference type="InParanoid" id="Q54PP6"/>
<dbReference type="OMA" id="KREPTIH"/>
<dbReference type="PRO" id="PR:Q54PP6"/>
<dbReference type="Proteomes" id="UP000002195">
    <property type="component" value="Chromosome 4"/>
</dbReference>
<dbReference type="CDD" id="cd00167">
    <property type="entry name" value="SANT"/>
    <property type="match status" value="1"/>
</dbReference>
<dbReference type="Gene3D" id="1.10.10.60">
    <property type="entry name" value="Homeodomain-like"/>
    <property type="match status" value="1"/>
</dbReference>
<dbReference type="InterPro" id="IPR009057">
    <property type="entry name" value="Homeodomain-like_sf"/>
</dbReference>
<dbReference type="InterPro" id="IPR001005">
    <property type="entry name" value="SANT/Myb"/>
</dbReference>
<dbReference type="InterPro" id="IPR037830">
    <property type="entry name" value="ZZZ3"/>
</dbReference>
<dbReference type="PANTHER" id="PTHR22705:SF2">
    <property type="entry name" value="MYB-LIKE PROTEIN Y"/>
    <property type="match status" value="1"/>
</dbReference>
<dbReference type="PANTHER" id="PTHR22705">
    <property type="entry name" value="ZINC FINGER, ZZ DOMAIN CONTAINING 3"/>
    <property type="match status" value="1"/>
</dbReference>
<dbReference type="SMART" id="SM00717">
    <property type="entry name" value="SANT"/>
    <property type="match status" value="1"/>
</dbReference>
<dbReference type="SUPFAM" id="SSF46689">
    <property type="entry name" value="Homeodomain-like"/>
    <property type="match status" value="1"/>
</dbReference>
<sequence length="572" mass="63128">MSDLREINRLNKDEEFEYFKLYSNSNGFRKWNLDEHNIFSKASLEYNFLKPDQMIEILKLVNQHNSNTSCKARTLEELNIHIKVYQNFLNKQQALRSPTTGSLNISGFGNPITSGGGGLGVLGGGGGGGGISSSSLGGLSGSGLFLNTMVNNTFQTILDSLDGNSSNNNNNNIPSTSSVKDVVSIGINPLFQKSVQSQSQLPTATNNNNKQPLELISKPIPTATATATTTATTTTTTIQPPIGGTKNTVNKEIEQDSNDNDNNNNTNNNNNNNNNNNNNNNNEEKEKQYLNYINNSLGELNKKDLKLLNEPWTVEDQKKLEDALTKYPPSRFSSVSRWQMVSKELGISPKAVALRYNQMLNQLIPKKPSLQQQQQQQQQQQQQPTTTTTTTTKPEQSIKSEEEEQTTGKRKSRSSFSSPSSSSKESPNKKEKTTHDTTTTTNTATTTTVTPNMTTPSIINSSPAIAANLLEADSLLQKNNQLLKQIRTSVMQLTDPQSTILTEVIENINNSIQLTGKWKDNIEMPPLPLKVNDLILSLISNNTSSSFKKPLSKKVTEWNLVVEDDAPTQDKK</sequence>
<evidence type="ECO:0000256" key="1">
    <source>
        <dbReference type="SAM" id="MobiDB-lite"/>
    </source>
</evidence>
<name>MYBY_DICDI</name>
<organism>
    <name type="scientific">Dictyostelium discoideum</name>
    <name type="common">Social amoeba</name>
    <dbReference type="NCBI Taxonomy" id="44689"/>
    <lineage>
        <taxon>Eukaryota</taxon>
        <taxon>Amoebozoa</taxon>
        <taxon>Evosea</taxon>
        <taxon>Eumycetozoa</taxon>
        <taxon>Dictyostelia</taxon>
        <taxon>Dictyosteliales</taxon>
        <taxon>Dictyosteliaceae</taxon>
        <taxon>Dictyostelium</taxon>
    </lineage>
</organism>
<protein>
    <recommendedName>
        <fullName>Myb-like protein Y</fullName>
    </recommendedName>
</protein>
<gene>
    <name type="primary">mybY</name>
    <name type="ORF">DDB_G0284399</name>
</gene>
<proteinExistence type="predicted"/>
<feature type="chain" id="PRO_0000329397" description="Myb-like protein Y">
    <location>
        <begin position="1"/>
        <end position="572"/>
    </location>
</feature>
<feature type="domain" description="Myb-like">
    <location>
        <begin position="311"/>
        <end position="360"/>
    </location>
</feature>
<feature type="region of interest" description="Disordered" evidence="1">
    <location>
        <begin position="196"/>
        <end position="283"/>
    </location>
</feature>
<feature type="region of interest" description="Disordered" evidence="1">
    <location>
        <begin position="367"/>
        <end position="456"/>
    </location>
</feature>
<feature type="compositionally biased region" description="Polar residues" evidence="1">
    <location>
        <begin position="196"/>
        <end position="211"/>
    </location>
</feature>
<feature type="compositionally biased region" description="Low complexity" evidence="1">
    <location>
        <begin position="222"/>
        <end position="237"/>
    </location>
</feature>
<feature type="compositionally biased region" description="Low complexity" evidence="1">
    <location>
        <begin position="260"/>
        <end position="281"/>
    </location>
</feature>
<feature type="compositionally biased region" description="Low complexity" evidence="1">
    <location>
        <begin position="371"/>
        <end position="392"/>
    </location>
</feature>
<feature type="compositionally biased region" description="Low complexity" evidence="1">
    <location>
        <begin position="414"/>
        <end position="425"/>
    </location>
</feature>
<feature type="compositionally biased region" description="Basic and acidic residues" evidence="1">
    <location>
        <begin position="426"/>
        <end position="435"/>
    </location>
</feature>
<feature type="compositionally biased region" description="Low complexity" evidence="1">
    <location>
        <begin position="436"/>
        <end position="455"/>
    </location>
</feature>
<keyword id="KW-1185">Reference proteome</keyword>
<accession>Q54PP6</accession>